<keyword id="KW-0030">Aminoacyl-tRNA synthetase</keyword>
<keyword id="KW-0067">ATP-binding</keyword>
<keyword id="KW-0963">Cytoplasm</keyword>
<keyword id="KW-0436">Ligase</keyword>
<keyword id="KW-0547">Nucleotide-binding</keyword>
<keyword id="KW-0648">Protein biosynthesis</keyword>
<keyword id="KW-1185">Reference proteome</keyword>
<gene>
    <name evidence="1" type="primary">gltX</name>
    <name type="ordered locus">Hbut_0542</name>
</gene>
<evidence type="ECO:0000255" key="1">
    <source>
        <dbReference type="HAMAP-Rule" id="MF_02076"/>
    </source>
</evidence>
<reference key="1">
    <citation type="journal article" date="2007" name="Archaea">
        <title>The genome of Hyperthermus butylicus: a sulfur-reducing, peptide fermenting, neutrophilic Crenarchaeote growing up to 108 degrees C.</title>
        <authorList>
            <person name="Bruegger K."/>
            <person name="Chen L."/>
            <person name="Stark M."/>
            <person name="Zibat A."/>
            <person name="Redder P."/>
            <person name="Ruepp A."/>
            <person name="Awayez M."/>
            <person name="She Q."/>
            <person name="Garrett R.A."/>
            <person name="Klenk H.-P."/>
        </authorList>
    </citation>
    <scope>NUCLEOTIDE SEQUENCE [LARGE SCALE GENOMIC DNA]</scope>
    <source>
        <strain>DSM 5456 / JCM 9403 / PLM1-5</strain>
    </source>
</reference>
<comment type="function">
    <text evidence="1">Catalyzes the attachment of glutamate to tRNA(Glu) in a two-step reaction: glutamate is first activated by ATP to form Glu-AMP and then transferred to the acceptor end of tRNA(Glu).</text>
</comment>
<comment type="catalytic activity">
    <reaction evidence="1">
        <text>tRNA(Glu) + L-glutamate + ATP = L-glutamyl-tRNA(Glu) + AMP + diphosphate</text>
        <dbReference type="Rhea" id="RHEA:23540"/>
        <dbReference type="Rhea" id="RHEA-COMP:9663"/>
        <dbReference type="Rhea" id="RHEA-COMP:9680"/>
        <dbReference type="ChEBI" id="CHEBI:29985"/>
        <dbReference type="ChEBI" id="CHEBI:30616"/>
        <dbReference type="ChEBI" id="CHEBI:33019"/>
        <dbReference type="ChEBI" id="CHEBI:78442"/>
        <dbReference type="ChEBI" id="CHEBI:78520"/>
        <dbReference type="ChEBI" id="CHEBI:456215"/>
        <dbReference type="EC" id="6.1.1.17"/>
    </reaction>
</comment>
<comment type="subcellular location">
    <subcellularLocation>
        <location evidence="1">Cytoplasm</location>
    </subcellularLocation>
</comment>
<comment type="similarity">
    <text evidence="1">Belongs to the class-I aminoacyl-tRNA synthetase family. Glutamate--tRNA ligase type 2 subfamily.</text>
</comment>
<accession>A2BK91</accession>
<sequence>MLNAVGHGGRAAVGPVMGKIMAERPDLRPQAKQIVAIVREVVEEVNKLSLEEQKRLLEEKYSWVIEKKLQKRREAVEKKLPPLPDAEEGRVVTRFAPNPDFVIHLGNARPALLSYEYAVMYRGKMILRFEDTDPRIKTPLPEAYELIREDLKWLGIRWDEEYIQSLRMHIYYDIARKLIEVGGAYVDDRSPEEFRRYRDEGRLEDYPPRKRSVEENLELWDKMVSGAFGEGEAVLRVKTDPRHPDPSVRDWVAFRIIDTSRYPHPLVGDRYVAWPTYNFAAAVDDKLMGVTHILRAKEHMQNTIKQQFLYKHLGWSYPHVVHFGRLKLEGFIMSKSTLKRFLDAGISRGIDDPRFATIAGLRRRGIVPEAIKKLIMEVGVKYTDASISYDNLAAINRSIIDPRAKRIMAALSPVPVEVEGLPWREKEFRIPFHPSGQLGERIVKLAGPKATIYVSQSDAVQLAKGNIVRLMEAFNIEVLGASPRRVRARYHSLTVDEARQHNAPIIQWVPATDNIAVEVLKPEGLDLVQERGLAEPAAAQLKPGEIIQLVRIGFARVDSVETDEKGKVRKVVLIYAHD</sequence>
<name>SYE_HYPBU</name>
<feature type="chain" id="PRO_0000367801" description="Glutamate--tRNA ligase">
    <location>
        <begin position="1"/>
        <end position="578"/>
    </location>
</feature>
<feature type="short sequence motif" description="'HIGH' region" evidence="1">
    <location>
        <begin position="97"/>
        <end position="107"/>
    </location>
</feature>
<proteinExistence type="inferred from homology"/>
<dbReference type="EC" id="6.1.1.17" evidence="1"/>
<dbReference type="EMBL" id="CP000493">
    <property type="protein sequence ID" value="ABM80402.1"/>
    <property type="molecule type" value="Genomic_DNA"/>
</dbReference>
<dbReference type="SMR" id="A2BK91"/>
<dbReference type="STRING" id="415426.Hbut_0542"/>
<dbReference type="EnsemblBacteria" id="ABM80402">
    <property type="protein sequence ID" value="ABM80402"/>
    <property type="gene ID" value="Hbut_0542"/>
</dbReference>
<dbReference type="KEGG" id="hbu:Hbut_0542"/>
<dbReference type="eggNOG" id="arCOG04302">
    <property type="taxonomic scope" value="Archaea"/>
</dbReference>
<dbReference type="HOGENOM" id="CLU_001882_1_3_2"/>
<dbReference type="Proteomes" id="UP000002593">
    <property type="component" value="Chromosome"/>
</dbReference>
<dbReference type="GO" id="GO:0005829">
    <property type="term" value="C:cytosol"/>
    <property type="evidence" value="ECO:0007669"/>
    <property type="project" value="TreeGrafter"/>
</dbReference>
<dbReference type="GO" id="GO:0005524">
    <property type="term" value="F:ATP binding"/>
    <property type="evidence" value="ECO:0007669"/>
    <property type="project" value="UniProtKB-UniRule"/>
</dbReference>
<dbReference type="GO" id="GO:0004818">
    <property type="term" value="F:glutamate-tRNA ligase activity"/>
    <property type="evidence" value="ECO:0007669"/>
    <property type="project" value="UniProtKB-UniRule"/>
</dbReference>
<dbReference type="GO" id="GO:0043604">
    <property type="term" value="P:amide biosynthetic process"/>
    <property type="evidence" value="ECO:0007669"/>
    <property type="project" value="TreeGrafter"/>
</dbReference>
<dbReference type="GO" id="GO:0006424">
    <property type="term" value="P:glutamyl-tRNA aminoacylation"/>
    <property type="evidence" value="ECO:0007669"/>
    <property type="project" value="UniProtKB-UniRule"/>
</dbReference>
<dbReference type="Gene3D" id="2.40.240.100">
    <property type="match status" value="1"/>
</dbReference>
<dbReference type="Gene3D" id="3.40.50.620">
    <property type="entry name" value="HUPs"/>
    <property type="match status" value="1"/>
</dbReference>
<dbReference type="Gene3D" id="2.40.240.10">
    <property type="entry name" value="Ribosomal Protein L25, Chain P"/>
    <property type="match status" value="1"/>
</dbReference>
<dbReference type="HAMAP" id="MF_02076">
    <property type="entry name" value="Glu_tRNA_synth_type2"/>
    <property type="match status" value="1"/>
</dbReference>
<dbReference type="InterPro" id="IPR050132">
    <property type="entry name" value="Gln/Glu-tRNA_Ligase"/>
</dbReference>
<dbReference type="InterPro" id="IPR004526">
    <property type="entry name" value="Glu-tRNA-synth_arc/euk"/>
</dbReference>
<dbReference type="InterPro" id="IPR000924">
    <property type="entry name" value="Glu/Gln-tRNA-synth"/>
</dbReference>
<dbReference type="InterPro" id="IPR020058">
    <property type="entry name" value="Glu/Gln-tRNA-synth_Ib_cat-dom"/>
</dbReference>
<dbReference type="InterPro" id="IPR020059">
    <property type="entry name" value="Glu/Gln-tRNA-synth_Ib_codon-bd"/>
</dbReference>
<dbReference type="InterPro" id="IPR020056">
    <property type="entry name" value="Rbsml_bL25/Gln-tRNA_synth_N"/>
</dbReference>
<dbReference type="InterPro" id="IPR011035">
    <property type="entry name" value="Ribosomal_bL25/Gln-tRNA_synth"/>
</dbReference>
<dbReference type="InterPro" id="IPR014729">
    <property type="entry name" value="Rossmann-like_a/b/a_fold"/>
</dbReference>
<dbReference type="InterPro" id="IPR049437">
    <property type="entry name" value="tRNA-synt_1c_C2"/>
</dbReference>
<dbReference type="NCBIfam" id="TIGR00463">
    <property type="entry name" value="gltX_arch"/>
    <property type="match status" value="1"/>
</dbReference>
<dbReference type="NCBIfam" id="NF003169">
    <property type="entry name" value="PRK04156.1"/>
    <property type="match status" value="1"/>
</dbReference>
<dbReference type="PANTHER" id="PTHR43097:SF5">
    <property type="entry name" value="GLUTAMATE--TRNA LIGASE"/>
    <property type="match status" value="1"/>
</dbReference>
<dbReference type="PANTHER" id="PTHR43097">
    <property type="entry name" value="GLUTAMINE-TRNA LIGASE"/>
    <property type="match status" value="1"/>
</dbReference>
<dbReference type="Pfam" id="PF00749">
    <property type="entry name" value="tRNA-synt_1c"/>
    <property type="match status" value="1"/>
</dbReference>
<dbReference type="Pfam" id="PF03950">
    <property type="entry name" value="tRNA-synt_1c_C"/>
    <property type="match status" value="1"/>
</dbReference>
<dbReference type="Pfam" id="PF20974">
    <property type="entry name" value="tRNA-synt_1c_C2"/>
    <property type="match status" value="1"/>
</dbReference>
<dbReference type="PRINTS" id="PR00987">
    <property type="entry name" value="TRNASYNTHGLU"/>
</dbReference>
<dbReference type="SUPFAM" id="SSF52374">
    <property type="entry name" value="Nucleotidylyl transferase"/>
    <property type="match status" value="1"/>
</dbReference>
<dbReference type="SUPFAM" id="SSF50715">
    <property type="entry name" value="Ribosomal protein L25-like"/>
    <property type="match status" value="1"/>
</dbReference>
<organism>
    <name type="scientific">Hyperthermus butylicus (strain DSM 5456 / JCM 9403 / PLM1-5)</name>
    <dbReference type="NCBI Taxonomy" id="415426"/>
    <lineage>
        <taxon>Archaea</taxon>
        <taxon>Thermoproteota</taxon>
        <taxon>Thermoprotei</taxon>
        <taxon>Desulfurococcales</taxon>
        <taxon>Pyrodictiaceae</taxon>
        <taxon>Hyperthermus</taxon>
    </lineage>
</organism>
<protein>
    <recommendedName>
        <fullName evidence="1">Glutamate--tRNA ligase</fullName>
        <ecNumber evidence="1">6.1.1.17</ecNumber>
    </recommendedName>
    <alternativeName>
        <fullName evidence="1">Glutamyl-tRNA synthetase</fullName>
        <shortName evidence="1">GluRS</shortName>
    </alternativeName>
</protein>